<proteinExistence type="inferred from homology"/>
<gene>
    <name evidence="1" type="primary">htpX</name>
    <name type="ordered locus">BUAP5A_314</name>
</gene>
<comment type="cofactor">
    <cofactor evidence="1">
        <name>Zn(2+)</name>
        <dbReference type="ChEBI" id="CHEBI:29105"/>
    </cofactor>
    <text evidence="1">Binds 1 zinc ion per subunit.</text>
</comment>
<comment type="subcellular location">
    <subcellularLocation>
        <location evidence="1">Cell membrane</location>
        <topology evidence="1">Multi-pass membrane protein</topology>
    </subcellularLocation>
</comment>
<comment type="similarity">
    <text evidence="1">Belongs to the peptidase M48B family.</text>
</comment>
<feature type="chain" id="PRO_1000124222" description="Protease HtpX">
    <location>
        <begin position="1"/>
        <end position="292"/>
    </location>
</feature>
<feature type="transmembrane region" description="Helical" evidence="1">
    <location>
        <begin position="4"/>
        <end position="24"/>
    </location>
</feature>
<feature type="transmembrane region" description="Helical" evidence="1">
    <location>
        <begin position="32"/>
        <end position="52"/>
    </location>
</feature>
<feature type="transmembrane region" description="Helical" evidence="1">
    <location>
        <begin position="147"/>
        <end position="167"/>
    </location>
</feature>
<feature type="transmembrane region" description="Helical" evidence="1">
    <location>
        <begin position="193"/>
        <end position="213"/>
    </location>
</feature>
<feature type="active site" evidence="1">
    <location>
        <position position="140"/>
    </location>
</feature>
<feature type="binding site" evidence="1">
    <location>
        <position position="139"/>
    </location>
    <ligand>
        <name>Zn(2+)</name>
        <dbReference type="ChEBI" id="CHEBI:29105"/>
        <note>catalytic</note>
    </ligand>
</feature>
<feature type="binding site" evidence="1">
    <location>
        <position position="143"/>
    </location>
    <ligand>
        <name>Zn(2+)</name>
        <dbReference type="ChEBI" id="CHEBI:29105"/>
        <note>catalytic</note>
    </ligand>
</feature>
<feature type="binding site" evidence="1">
    <location>
        <position position="222"/>
    </location>
    <ligand>
        <name>Zn(2+)</name>
        <dbReference type="ChEBI" id="CHEBI:29105"/>
        <note>catalytic</note>
    </ligand>
</feature>
<evidence type="ECO:0000255" key="1">
    <source>
        <dbReference type="HAMAP-Rule" id="MF_00188"/>
    </source>
</evidence>
<protein>
    <recommendedName>
        <fullName evidence="1">Protease HtpX</fullName>
        <ecNumber evidence="1">3.4.24.-</ecNumber>
    </recommendedName>
    <alternativeName>
        <fullName evidence="1">Heat shock protein HtpX</fullName>
    </alternativeName>
</protein>
<organism>
    <name type="scientific">Buchnera aphidicola subsp. Acyrthosiphon pisum (strain 5A)</name>
    <dbReference type="NCBI Taxonomy" id="563178"/>
    <lineage>
        <taxon>Bacteria</taxon>
        <taxon>Pseudomonadati</taxon>
        <taxon>Pseudomonadota</taxon>
        <taxon>Gammaproteobacteria</taxon>
        <taxon>Enterobacterales</taxon>
        <taxon>Erwiniaceae</taxon>
        <taxon>Buchnera</taxon>
    </lineage>
</organism>
<accession>B8D9B1</accession>
<dbReference type="EC" id="3.4.24.-" evidence="1"/>
<dbReference type="EMBL" id="CP001161">
    <property type="protein sequence ID" value="ACL30682.1"/>
    <property type="molecule type" value="Genomic_DNA"/>
</dbReference>
<dbReference type="RefSeq" id="WP_009874275.1">
    <property type="nucleotide sequence ID" value="NC_011833.1"/>
</dbReference>
<dbReference type="SMR" id="B8D9B1"/>
<dbReference type="MEROPS" id="M48.002"/>
<dbReference type="KEGG" id="bap:BUAP5A_314"/>
<dbReference type="HOGENOM" id="CLU_042266_1_0_6"/>
<dbReference type="OrthoDB" id="15218at2"/>
<dbReference type="Proteomes" id="UP000006904">
    <property type="component" value="Chromosome"/>
</dbReference>
<dbReference type="GO" id="GO:0005886">
    <property type="term" value="C:plasma membrane"/>
    <property type="evidence" value="ECO:0007669"/>
    <property type="project" value="UniProtKB-SubCell"/>
</dbReference>
<dbReference type="GO" id="GO:0004222">
    <property type="term" value="F:metalloendopeptidase activity"/>
    <property type="evidence" value="ECO:0007669"/>
    <property type="project" value="UniProtKB-UniRule"/>
</dbReference>
<dbReference type="GO" id="GO:0008270">
    <property type="term" value="F:zinc ion binding"/>
    <property type="evidence" value="ECO:0007669"/>
    <property type="project" value="UniProtKB-UniRule"/>
</dbReference>
<dbReference type="GO" id="GO:0006508">
    <property type="term" value="P:proteolysis"/>
    <property type="evidence" value="ECO:0007669"/>
    <property type="project" value="UniProtKB-KW"/>
</dbReference>
<dbReference type="CDD" id="cd07335">
    <property type="entry name" value="M48B_HtpX_like"/>
    <property type="match status" value="1"/>
</dbReference>
<dbReference type="FunFam" id="3.30.2010.10:FF:000001">
    <property type="entry name" value="Protease HtpX"/>
    <property type="match status" value="1"/>
</dbReference>
<dbReference type="Gene3D" id="3.30.2010.10">
    <property type="entry name" value="Metalloproteases ('zincins'), catalytic domain"/>
    <property type="match status" value="1"/>
</dbReference>
<dbReference type="HAMAP" id="MF_00188">
    <property type="entry name" value="Pept_M48_protease_HtpX"/>
    <property type="match status" value="1"/>
</dbReference>
<dbReference type="InterPro" id="IPR050083">
    <property type="entry name" value="HtpX_protease"/>
</dbReference>
<dbReference type="InterPro" id="IPR022919">
    <property type="entry name" value="Pept_M48_protease_HtpX"/>
</dbReference>
<dbReference type="InterPro" id="IPR001915">
    <property type="entry name" value="Peptidase_M48"/>
</dbReference>
<dbReference type="NCBIfam" id="NF003965">
    <property type="entry name" value="PRK05457.1"/>
    <property type="match status" value="1"/>
</dbReference>
<dbReference type="PANTHER" id="PTHR43221">
    <property type="entry name" value="PROTEASE HTPX"/>
    <property type="match status" value="1"/>
</dbReference>
<dbReference type="PANTHER" id="PTHR43221:SF1">
    <property type="entry name" value="PROTEASE HTPX"/>
    <property type="match status" value="1"/>
</dbReference>
<dbReference type="Pfam" id="PF01435">
    <property type="entry name" value="Peptidase_M48"/>
    <property type="match status" value="1"/>
</dbReference>
<name>HTPX_BUCA5</name>
<sequence length="292" mass="32762">MTRIVLFLLTNLAVMLIFSLILFLTGIQSNTIYGLLIMSGLFGFSGSILSLILSKWIALRSVNGEIITHPRNEVESWLINTVRQQSIQKGIIMPQIAVYHATDINAFATGARRNSALIAVSTGLLENMTHHEAEAVIAHEISHIANGDMITMTLVQGVVNTFVIFISRFLSQIISNVMSSNRNENNTEEKNSFVYFLVSTFLELIFGILASIITMWFSRHREFYADASSAKMVGREKMIAALNRLKTSHEPQESDSMIAFCINGKSKSFLKLFASHPSLENRIEALYNQEYM</sequence>
<reference key="1">
    <citation type="journal article" date="2009" name="Science">
        <title>The dynamics and time scale of ongoing genomic erosion in symbiotic bacteria.</title>
        <authorList>
            <person name="Moran N.A."/>
            <person name="McLaughlin H.J."/>
            <person name="Sorek R."/>
        </authorList>
    </citation>
    <scope>NUCLEOTIDE SEQUENCE [LARGE SCALE GENOMIC DNA]</scope>
    <source>
        <strain>5A</strain>
    </source>
</reference>
<keyword id="KW-1003">Cell membrane</keyword>
<keyword id="KW-0378">Hydrolase</keyword>
<keyword id="KW-0472">Membrane</keyword>
<keyword id="KW-0479">Metal-binding</keyword>
<keyword id="KW-0482">Metalloprotease</keyword>
<keyword id="KW-0645">Protease</keyword>
<keyword id="KW-0346">Stress response</keyword>
<keyword id="KW-0812">Transmembrane</keyword>
<keyword id="KW-1133">Transmembrane helix</keyword>
<keyword id="KW-0862">Zinc</keyword>